<keyword id="KW-0997">Cell inner membrane</keyword>
<keyword id="KW-1003">Cell membrane</keyword>
<keyword id="KW-0472">Membrane</keyword>
<keyword id="KW-1185">Reference proteome</keyword>
<keyword id="KW-0812">Transmembrane</keyword>
<keyword id="KW-1133">Transmembrane helix</keyword>
<keyword id="KW-0813">Transport</keyword>
<dbReference type="EMBL" id="AE002098">
    <property type="protein sequence ID" value="AAF41616.1"/>
    <property type="molecule type" value="Genomic_DNA"/>
</dbReference>
<dbReference type="PIR" id="D81107">
    <property type="entry name" value="D81107"/>
</dbReference>
<dbReference type="RefSeq" id="NP_274259.1">
    <property type="nucleotide sequence ID" value="NC_003112.2"/>
</dbReference>
<dbReference type="RefSeq" id="WP_002225196.1">
    <property type="nucleotide sequence ID" value="NC_003112.2"/>
</dbReference>
<dbReference type="SMR" id="P57062"/>
<dbReference type="FunCoup" id="P57062">
    <property type="interactions" value="211"/>
</dbReference>
<dbReference type="STRING" id="122586.NMB1235"/>
<dbReference type="PaxDb" id="122586-NMB1235"/>
<dbReference type="KEGG" id="nme:NMB1235"/>
<dbReference type="PATRIC" id="fig|122586.8.peg.1545"/>
<dbReference type="HOGENOM" id="CLU_000604_8_1_4"/>
<dbReference type="InParanoid" id="P57062"/>
<dbReference type="OrthoDB" id="9808461at2"/>
<dbReference type="Proteomes" id="UP000000425">
    <property type="component" value="Chromosome"/>
</dbReference>
<dbReference type="GO" id="GO:0098797">
    <property type="term" value="C:plasma membrane protein complex"/>
    <property type="evidence" value="ECO:0000318"/>
    <property type="project" value="GO_Central"/>
</dbReference>
<dbReference type="GO" id="GO:0044874">
    <property type="term" value="P:lipoprotein localization to outer membrane"/>
    <property type="evidence" value="ECO:0000318"/>
    <property type="project" value="GO_Central"/>
</dbReference>
<dbReference type="GO" id="GO:0042953">
    <property type="term" value="P:lipoprotein transport"/>
    <property type="evidence" value="ECO:0007669"/>
    <property type="project" value="InterPro"/>
</dbReference>
<dbReference type="InterPro" id="IPR003838">
    <property type="entry name" value="ABC3_permease_C"/>
</dbReference>
<dbReference type="InterPro" id="IPR051447">
    <property type="entry name" value="Lipoprotein-release_system"/>
</dbReference>
<dbReference type="InterPro" id="IPR011925">
    <property type="entry name" value="LolCE_TM"/>
</dbReference>
<dbReference type="InterPro" id="IPR025857">
    <property type="entry name" value="MacB_PCD"/>
</dbReference>
<dbReference type="NCBIfam" id="TIGR02212">
    <property type="entry name" value="lolCE"/>
    <property type="match status" value="1"/>
</dbReference>
<dbReference type="PANTHER" id="PTHR30489">
    <property type="entry name" value="LIPOPROTEIN-RELEASING SYSTEM TRANSMEMBRANE PROTEIN LOLE"/>
    <property type="match status" value="1"/>
</dbReference>
<dbReference type="PANTHER" id="PTHR30489:SF0">
    <property type="entry name" value="LIPOPROTEIN-RELEASING SYSTEM TRANSMEMBRANE PROTEIN LOLE"/>
    <property type="match status" value="1"/>
</dbReference>
<dbReference type="Pfam" id="PF02687">
    <property type="entry name" value="FtsX"/>
    <property type="match status" value="1"/>
</dbReference>
<dbReference type="Pfam" id="PF12704">
    <property type="entry name" value="MacB_PCD"/>
    <property type="match status" value="1"/>
</dbReference>
<evidence type="ECO:0000250" key="1"/>
<evidence type="ECO:0000255" key="2"/>
<evidence type="ECO:0000305" key="3"/>
<sequence>MFSLEAWIGLRYLRAKKRNGFMSFITMVSIAGIALGVTALIVVLSVMNGFQKEIRGQLLNVAPHAEIGYIDNTDTDWRNLLRFTENRKGILAAAPYVSNQALLANAGEIRGVQMRGILPSEERKVVEYGDKMPAGKFEDLIPGEFDIILGVGLAEALGAEVGNKVTVITPEGNVTPAGVVPRLKQFTVVGLVKTGVYEVDNSLAMTHIQDARVLYRLDKEVAGLRLKLADPQNAPALTATLIPEAQRDAVWVRDWTYSNRSYFEAVELEKRMMFIILTLIIAVAAFNLVSSLVMAVTEKQADIAILRTLGLSPAGVMKIFMVQGAFSGFFGTLAGVVCGVLLGWNVGRVVAFFENLLGVHLINSQVYFIDYLPSDVDMGDVALIACISLGLSFVATLYPSRRASKTQPAEALRYE</sequence>
<comment type="function">
    <text evidence="1">Part of an ATP-dependent transport system responsible for the release of lipoproteins targeted to the outer membrane from the inner membrane. Such a release is dependent of the sorting-signal (absence of an Asp at position 2 of the mature lipoprotein) and of LolA (By similarity).</text>
</comment>
<comment type="subcellular location">
    <subcellularLocation>
        <location evidence="1">Cell inner membrane</location>
        <topology evidence="1">Multi-pass membrane protein</topology>
    </subcellularLocation>
</comment>
<comment type="similarity">
    <text evidence="3">Belongs to the ABC-4 integral membrane protein family. LolC/E subfamily.</text>
</comment>
<feature type="chain" id="PRO_0000201815" description="Lipoprotein-releasing system transmembrane protein LolC">
    <location>
        <begin position="1"/>
        <end position="415"/>
    </location>
</feature>
<feature type="transmembrane region" description="Helical" evidence="2">
    <location>
        <begin position="24"/>
        <end position="44"/>
    </location>
</feature>
<feature type="transmembrane region" description="Helical" evidence="2">
    <location>
        <begin position="273"/>
        <end position="293"/>
    </location>
</feature>
<feature type="transmembrane region" description="Helical" evidence="2">
    <location>
        <begin position="324"/>
        <end position="344"/>
    </location>
</feature>
<feature type="transmembrane region" description="Helical" evidence="2">
    <location>
        <begin position="378"/>
        <end position="398"/>
    </location>
</feature>
<accession>P57062</accession>
<organism>
    <name type="scientific">Neisseria meningitidis serogroup B (strain ATCC BAA-335 / MC58)</name>
    <dbReference type="NCBI Taxonomy" id="122586"/>
    <lineage>
        <taxon>Bacteria</taxon>
        <taxon>Pseudomonadati</taxon>
        <taxon>Pseudomonadota</taxon>
        <taxon>Betaproteobacteria</taxon>
        <taxon>Neisseriales</taxon>
        <taxon>Neisseriaceae</taxon>
        <taxon>Neisseria</taxon>
    </lineage>
</organism>
<protein>
    <recommendedName>
        <fullName>Lipoprotein-releasing system transmembrane protein LolC</fullName>
    </recommendedName>
</protein>
<name>LOLC_NEIMB</name>
<reference key="1">
    <citation type="journal article" date="2000" name="Science">
        <title>Complete genome sequence of Neisseria meningitidis serogroup B strain MC58.</title>
        <authorList>
            <person name="Tettelin H."/>
            <person name="Saunders N.J."/>
            <person name="Heidelberg J.F."/>
            <person name="Jeffries A.C."/>
            <person name="Nelson K.E."/>
            <person name="Eisen J.A."/>
            <person name="Ketchum K.A."/>
            <person name="Hood D.W."/>
            <person name="Peden J.F."/>
            <person name="Dodson R.J."/>
            <person name="Nelson W.C."/>
            <person name="Gwinn M.L."/>
            <person name="DeBoy R.T."/>
            <person name="Peterson J.D."/>
            <person name="Hickey E.K."/>
            <person name="Haft D.H."/>
            <person name="Salzberg S.L."/>
            <person name="White O."/>
            <person name="Fleischmann R.D."/>
            <person name="Dougherty B.A."/>
            <person name="Mason T.M."/>
            <person name="Ciecko A."/>
            <person name="Parksey D.S."/>
            <person name="Blair E."/>
            <person name="Cittone H."/>
            <person name="Clark E.B."/>
            <person name="Cotton M.D."/>
            <person name="Utterback T.R."/>
            <person name="Khouri H.M."/>
            <person name="Qin H."/>
            <person name="Vamathevan J.J."/>
            <person name="Gill J."/>
            <person name="Scarlato V."/>
            <person name="Masignani V."/>
            <person name="Pizza M."/>
            <person name="Grandi G."/>
            <person name="Sun L."/>
            <person name="Smith H.O."/>
            <person name="Fraser C.M."/>
            <person name="Moxon E.R."/>
            <person name="Rappuoli R."/>
            <person name="Venter J.C."/>
        </authorList>
    </citation>
    <scope>NUCLEOTIDE SEQUENCE [LARGE SCALE GENOMIC DNA]</scope>
    <source>
        <strain>ATCC BAA-335 / MC58</strain>
    </source>
</reference>
<gene>
    <name type="primary">lolC</name>
    <name type="ordered locus">NMB1235</name>
</gene>
<proteinExistence type="inferred from homology"/>